<evidence type="ECO:0000250" key="1">
    <source>
        <dbReference type="UniProtKB" id="Q9D011"/>
    </source>
</evidence>
<evidence type="ECO:0000256" key="2">
    <source>
        <dbReference type="SAM" id="MobiDB-lite"/>
    </source>
</evidence>
<evidence type="ECO:0000269" key="3">
    <source>
    </source>
</evidence>
<evidence type="ECO:0000269" key="4">
    <source>
    </source>
</evidence>
<evidence type="ECO:0000269" key="5">
    <source>
    </source>
</evidence>
<evidence type="ECO:0000269" key="6">
    <source>
    </source>
</evidence>
<evidence type="ECO:0007744" key="7">
    <source>
    </source>
</evidence>
<evidence type="ECO:0007744" key="8">
    <source>
    </source>
</evidence>
<evidence type="ECO:0007744" key="9">
    <source>
    </source>
</evidence>
<evidence type="ECO:0007744" key="10">
    <source>
    </source>
</evidence>
<evidence type="ECO:0007744" key="11">
    <source>
    </source>
</evidence>
<evidence type="ECO:0007744" key="12">
    <source>
    </source>
</evidence>
<protein>
    <recommendedName>
        <fullName>M-phase-specific PLK1-interacting protein</fullName>
    </recommendedName>
    <alternativeName>
        <fullName>TTD non-photosensitive 1 protein</fullName>
    </alternativeName>
</protein>
<accession>Q8TAP9</accession>
<sequence>MQRQNFRPPTPPYPGPGGGGWGSGSSFRGTPGGGGPRPPSPRDGYGSPHHTPPYGPRSRPYGSSHSPRHGGSFPGGRFGSPSPGGYPGSYSRSPAGSQQQFGYSPGQQQTHPQGSPRTSTPFGSGRVREKRMSNELENYFKPSMLEDPWAGLEPVSVVDISQQYSNTQTFTGKKGRYFC</sequence>
<comment type="function">
    <text evidence="6">May play a role in maintenance of cell cycle integrity by regulating mitosis or cytokinesis.</text>
</comment>
<comment type="subunit">
    <text evidence="6">Interacts with PLK1; phosphorylation-dependent.</text>
</comment>
<comment type="interaction">
    <interactant intactId="EBI-11603426">
        <id>Q8TAP9</id>
    </interactant>
    <interactant intactId="EBI-357530">
        <id>Q9ULX6</id>
        <label>AKAP8L</label>
    </interactant>
    <organismsDiffer>false</organismsDiffer>
    <experiments>3</experiments>
</comment>
<comment type="interaction">
    <interactant intactId="EBI-11603426">
        <id>Q8TAP9</id>
    </interactant>
    <interactant intactId="EBI-739467">
        <id>Q9H8Y8</id>
        <label>GORASP2</label>
    </interactant>
    <organismsDiffer>false</organismsDiffer>
    <experiments>5</experiments>
</comment>
<comment type="interaction">
    <interactant intactId="EBI-11603426">
        <id>Q8TAP9</id>
    </interactant>
    <interactant intactId="EBI-741158">
        <id>Q96HA8</id>
        <label>NTAQ1</label>
    </interactant>
    <organismsDiffer>false</organismsDiffer>
    <experiments>3</experiments>
</comment>
<comment type="subcellular location">
    <subcellularLocation>
        <location>Nucleus</location>
    </subcellularLocation>
    <subcellularLocation>
        <location>Cytoplasm</location>
    </subcellularLocation>
    <subcellularLocation>
        <location>Cytoplasm</location>
        <location>Cytoskeleton</location>
        <location>Microtubule organizing center</location>
        <location>Centrosome</location>
    </subcellularLocation>
    <text>The subcellular location is regulated during cell cycle. During interphase located in the nucleus. During mitosis located at the centrosome and dispersed in the cytoplasm. During telophase located in the midbody. Colocalizes with PLK1 at the centrosome in M phase.</text>
</comment>
<comment type="tissue specificity">
    <text evidence="3 4">Expressed at highest levels in liver and kidney; intermediate expression in skeletal muscle, pancreas, heart and placenta; low expression in brain and lung. Expressed in epidermis and hair follicles.</text>
</comment>
<comment type="PTM">
    <text evidence="6">Phosphorylated during mitosis in the cell cycle probably by CDK1.</text>
</comment>
<comment type="disease" evidence="4">
    <disease id="DI-01105">
        <name>Trichothiodystrophy 4, non-photosensitive</name>
        <acronym>TTD4</acronym>
        <description>A form of trichothiodystrophy, an autosomal recessive disease characterized by sulfur-deficient brittle hair and multisystem variable abnormalities. The spectrum of clinical features varies from mild disease with only hair involvement to severe disease with cutaneous, neurologic and profound developmental defects. Ichthyosis, intellectual and developmental disabilities, decreased fertility, abnormal characteristics at birth, ocular abnormalities, short stature, and infections are common manifestations. There are both photosensitive and non-photosensitive forms of the disorder. TTD4 patients do not manifest cutaneous photosensitivity.</description>
        <dbReference type="MIM" id="234050"/>
    </disease>
    <text>The disease is caused by variants affecting the gene represented in this entry.</text>
</comment>
<proteinExistence type="evidence at protein level"/>
<organism>
    <name type="scientific">Homo sapiens</name>
    <name type="common">Human</name>
    <dbReference type="NCBI Taxonomy" id="9606"/>
    <lineage>
        <taxon>Eukaryota</taxon>
        <taxon>Metazoa</taxon>
        <taxon>Chordata</taxon>
        <taxon>Craniata</taxon>
        <taxon>Vertebrata</taxon>
        <taxon>Euteleostomi</taxon>
        <taxon>Mammalia</taxon>
        <taxon>Eutheria</taxon>
        <taxon>Euarchontoglires</taxon>
        <taxon>Primates</taxon>
        <taxon>Haplorrhini</taxon>
        <taxon>Catarrhini</taxon>
        <taxon>Hominidae</taxon>
        <taxon>Homo</taxon>
    </lineage>
</organism>
<dbReference type="EMBL" id="BC026265">
    <property type="protein sequence ID" value="AAH26265.1"/>
    <property type="molecule type" value="mRNA"/>
</dbReference>
<dbReference type="CCDS" id="CCDS5463.1"/>
<dbReference type="RefSeq" id="NP_619646.1">
    <property type="nucleotide sequence ID" value="NM_138701.4"/>
</dbReference>
<dbReference type="BioGRID" id="126463">
    <property type="interactions" value="37"/>
</dbReference>
<dbReference type="FunCoup" id="Q8TAP9">
    <property type="interactions" value="2421"/>
</dbReference>
<dbReference type="IntAct" id="Q8TAP9">
    <property type="interactions" value="14"/>
</dbReference>
<dbReference type="STRING" id="9606.ENSP00000304553"/>
<dbReference type="iPTMnet" id="Q8TAP9"/>
<dbReference type="PhosphoSitePlus" id="Q8TAP9"/>
<dbReference type="BioMuta" id="MPLKIP"/>
<dbReference type="DMDM" id="71153365"/>
<dbReference type="jPOST" id="Q8TAP9"/>
<dbReference type="MassIVE" id="Q8TAP9"/>
<dbReference type="PaxDb" id="9606-ENSP00000304553"/>
<dbReference type="PeptideAtlas" id="Q8TAP9"/>
<dbReference type="ProteomicsDB" id="73905"/>
<dbReference type="Pumba" id="Q8TAP9"/>
<dbReference type="Antibodypedia" id="53252">
    <property type="antibodies" value="59 antibodies from 13 providers"/>
</dbReference>
<dbReference type="DNASU" id="136647"/>
<dbReference type="Ensembl" id="ENST00000306984.8">
    <property type="protein sequence ID" value="ENSP00000304553.5"/>
    <property type="gene ID" value="ENSG00000168303.9"/>
</dbReference>
<dbReference type="GeneID" id="136647"/>
<dbReference type="KEGG" id="hsa:136647"/>
<dbReference type="MANE-Select" id="ENST00000306984.8">
    <property type="protein sequence ID" value="ENSP00000304553.5"/>
    <property type="RefSeq nucleotide sequence ID" value="NM_138701.4"/>
    <property type="RefSeq protein sequence ID" value="NP_619646.1"/>
</dbReference>
<dbReference type="UCSC" id="uc003thl.5">
    <property type="organism name" value="human"/>
</dbReference>
<dbReference type="AGR" id="HGNC:16002"/>
<dbReference type="CTD" id="136647"/>
<dbReference type="DisGeNET" id="136647"/>
<dbReference type="GeneCards" id="MPLKIP"/>
<dbReference type="HGNC" id="HGNC:16002">
    <property type="gene designation" value="MPLKIP"/>
</dbReference>
<dbReference type="HPA" id="ENSG00000168303">
    <property type="expression patterns" value="Low tissue specificity"/>
</dbReference>
<dbReference type="MalaCards" id="MPLKIP"/>
<dbReference type="MIM" id="234050">
    <property type="type" value="phenotype"/>
</dbReference>
<dbReference type="MIM" id="609188">
    <property type="type" value="gene"/>
</dbReference>
<dbReference type="neXtProt" id="NX_Q8TAP9"/>
<dbReference type="OpenTargets" id="ENSG00000168303"/>
<dbReference type="Orphanet" id="33364">
    <property type="disease" value="Trichothiodystrophy"/>
</dbReference>
<dbReference type="PharmGKB" id="PA25943"/>
<dbReference type="VEuPathDB" id="HostDB:ENSG00000168303"/>
<dbReference type="eggNOG" id="ENOG502S6ND">
    <property type="taxonomic scope" value="Eukaryota"/>
</dbReference>
<dbReference type="GeneTree" id="ENSGT00390000002582"/>
<dbReference type="HOGENOM" id="CLU_1510143_0_0_1"/>
<dbReference type="InParanoid" id="Q8TAP9"/>
<dbReference type="OMA" id="QTTCTGK"/>
<dbReference type="OrthoDB" id="6086265at2759"/>
<dbReference type="PAN-GO" id="Q8TAP9">
    <property type="GO annotations" value="3 GO annotations based on evolutionary models"/>
</dbReference>
<dbReference type="PhylomeDB" id="Q8TAP9"/>
<dbReference type="TreeFam" id="TF335586"/>
<dbReference type="PathwayCommons" id="Q8TAP9"/>
<dbReference type="SignaLink" id="Q8TAP9"/>
<dbReference type="SIGNOR" id="Q8TAP9"/>
<dbReference type="BioGRID-ORCS" id="136647">
    <property type="hits" value="28 hits in 1161 CRISPR screens"/>
</dbReference>
<dbReference type="CD-CODE" id="8C2F96ED">
    <property type="entry name" value="Centrosome"/>
</dbReference>
<dbReference type="ChiTaRS" id="MPLKIP">
    <property type="organism name" value="human"/>
</dbReference>
<dbReference type="GeneWiki" id="C7orf11"/>
<dbReference type="GeneWiki" id="MPLKIP"/>
<dbReference type="GenomeRNAi" id="136647"/>
<dbReference type="Pharos" id="Q8TAP9">
    <property type="development level" value="Tbio"/>
</dbReference>
<dbReference type="PRO" id="PR:Q8TAP9"/>
<dbReference type="Proteomes" id="UP000005640">
    <property type="component" value="Chromosome 7"/>
</dbReference>
<dbReference type="RNAct" id="Q8TAP9">
    <property type="molecule type" value="protein"/>
</dbReference>
<dbReference type="Bgee" id="ENSG00000168303">
    <property type="expression patterns" value="Expressed in kidney epithelium and 201 other cell types or tissues"/>
</dbReference>
<dbReference type="ExpressionAtlas" id="Q8TAP9">
    <property type="expression patterns" value="baseline and differential"/>
</dbReference>
<dbReference type="GO" id="GO:0005813">
    <property type="term" value="C:centrosome"/>
    <property type="evidence" value="ECO:0000314"/>
    <property type="project" value="UniProtKB"/>
</dbReference>
<dbReference type="GO" id="GO:0005737">
    <property type="term" value="C:cytoplasm"/>
    <property type="evidence" value="ECO:0000314"/>
    <property type="project" value="UniProtKB"/>
</dbReference>
<dbReference type="GO" id="GO:0005794">
    <property type="term" value="C:Golgi apparatus"/>
    <property type="evidence" value="ECO:0000314"/>
    <property type="project" value="HPA"/>
</dbReference>
<dbReference type="GO" id="GO:0043231">
    <property type="term" value="C:intracellular membrane-bounded organelle"/>
    <property type="evidence" value="ECO:0000314"/>
    <property type="project" value="HPA"/>
</dbReference>
<dbReference type="GO" id="GO:0030496">
    <property type="term" value="C:midbody"/>
    <property type="evidence" value="ECO:0000314"/>
    <property type="project" value="UniProtKB"/>
</dbReference>
<dbReference type="GO" id="GO:0005654">
    <property type="term" value="C:nucleoplasm"/>
    <property type="evidence" value="ECO:0000314"/>
    <property type="project" value="HPA"/>
</dbReference>
<dbReference type="GO" id="GO:0005634">
    <property type="term" value="C:nucleus"/>
    <property type="evidence" value="ECO:0000314"/>
    <property type="project" value="UniProtKB"/>
</dbReference>
<dbReference type="GO" id="GO:0051301">
    <property type="term" value="P:cell division"/>
    <property type="evidence" value="ECO:0007669"/>
    <property type="project" value="UniProtKB-KW"/>
</dbReference>
<dbReference type="InterPro" id="IPR026618">
    <property type="entry name" value="MPLKIP-like_vertebrate"/>
</dbReference>
<dbReference type="InterPro" id="IPR028265">
    <property type="entry name" value="TTDN1/SICKLE"/>
</dbReference>
<dbReference type="PANTHER" id="PTHR22446">
    <property type="entry name" value="M-PHASE-SPECIFIC PLK1-INTERACTING PROTEIN"/>
    <property type="match status" value="1"/>
</dbReference>
<dbReference type="PANTHER" id="PTHR22446:SF3">
    <property type="entry name" value="M-PHASE-SPECIFIC PLK1-INTERACTING PROTEIN"/>
    <property type="match status" value="1"/>
</dbReference>
<dbReference type="Pfam" id="PF15502">
    <property type="entry name" value="MPLKIP"/>
    <property type="match status" value="1"/>
</dbReference>
<keyword id="KW-0131">Cell cycle</keyword>
<keyword id="KW-0132">Cell division</keyword>
<keyword id="KW-0963">Cytoplasm</keyword>
<keyword id="KW-0206">Cytoskeleton</keyword>
<keyword id="KW-0225">Disease variant</keyword>
<keyword id="KW-0488">Methylation</keyword>
<keyword id="KW-0498">Mitosis</keyword>
<keyword id="KW-0539">Nucleus</keyword>
<keyword id="KW-0597">Phosphoprotein</keyword>
<keyword id="KW-1267">Proteomics identification</keyword>
<keyword id="KW-1185">Reference proteome</keyword>
<feature type="chain" id="PRO_0000065674" description="M-phase-specific PLK1-interacting protein">
    <location>
        <begin position="1"/>
        <end position="179"/>
    </location>
</feature>
<feature type="region of interest" description="Disordered" evidence="2">
    <location>
        <begin position="1"/>
        <end position="135"/>
    </location>
</feature>
<feature type="compositionally biased region" description="Low complexity" evidence="2">
    <location>
        <begin position="60"/>
        <end position="71"/>
    </location>
</feature>
<feature type="compositionally biased region" description="Low complexity" evidence="2">
    <location>
        <begin position="79"/>
        <end position="109"/>
    </location>
</feature>
<feature type="compositionally biased region" description="Polar residues" evidence="2">
    <location>
        <begin position="110"/>
        <end position="122"/>
    </location>
</feature>
<feature type="modified residue" description="Asymmetric dimethylarginine" evidence="1">
    <location>
        <position position="37"/>
    </location>
</feature>
<feature type="modified residue" description="Phosphoserine" evidence="11">
    <location>
        <position position="40"/>
    </location>
</feature>
<feature type="modified residue" description="Phosphoserine" evidence="8 11">
    <location>
        <position position="47"/>
    </location>
</feature>
<feature type="modified residue" description="Phosphothreonine" evidence="8 11">
    <location>
        <position position="51"/>
    </location>
</feature>
<feature type="modified residue" description="Omega-N-methylarginine" evidence="12">
    <location>
        <position position="57"/>
    </location>
</feature>
<feature type="modified residue" description="Asymmetric dimethylarginine" evidence="12">
    <location>
        <position position="59"/>
    </location>
</feature>
<feature type="modified residue" description="Asymmetric dimethylarginine" evidence="12">
    <location>
        <position position="68"/>
    </location>
</feature>
<feature type="modified residue" description="Phosphoserine" evidence="9 10">
    <location>
        <position position="72"/>
    </location>
</feature>
<feature type="modified residue" description="Asymmetric dimethylarginine" evidence="12">
    <location>
        <position position="77"/>
    </location>
</feature>
<feature type="modified residue" description="Phosphoserine" evidence="8 10 11">
    <location>
        <position position="80"/>
    </location>
</feature>
<feature type="modified residue" description="Phosphoserine" evidence="10">
    <location>
        <position position="82"/>
    </location>
</feature>
<feature type="modified residue" description="Phosphoserine" evidence="6 8">
    <location>
        <position position="93"/>
    </location>
</feature>
<feature type="modified residue" description="Phosphoserine" evidence="6 8">
    <location>
        <position position="104"/>
    </location>
</feature>
<feature type="modified residue" description="Phosphoserine" evidence="11">
    <location>
        <position position="115"/>
    </location>
</feature>
<feature type="modified residue" description="Omega-N-methylarginine" evidence="12">
    <location>
        <position position="117"/>
    </location>
</feature>
<feature type="modified residue" description="Phosphothreonine" evidence="8">
    <location>
        <position position="120"/>
    </location>
</feature>
<feature type="modified residue" description="Phosphoserine" evidence="8 11">
    <location>
        <position position="124"/>
    </location>
</feature>
<feature type="modified residue" description="Phosphoserine" evidence="7 9 10">
    <location>
        <position position="133"/>
    </location>
</feature>
<feature type="sequence variant" id="VAR_036273" description="In a breast cancer sample; somatic mutation; dbSNP:rs565833937." evidence="5">
    <original>G</original>
    <variation>E</variation>
    <location>
        <position position="29"/>
    </location>
</feature>
<feature type="sequence variant" id="VAR_022940" description="In TTD4; dbSNP:rs137853117." evidence="4">
    <original>M</original>
    <variation>V</variation>
    <location>
        <position position="144"/>
    </location>
</feature>
<feature type="mutagenesis site" description="Partially prevents phosphorylation." evidence="6">
    <original>S</original>
    <variation>A</variation>
    <location>
        <position position="93"/>
    </location>
</feature>
<feature type="mutagenesis site" description="Has no effect on interaction with PLK1 in mitosis. Partially prevents phosphorylation." evidence="6">
    <original>S</original>
    <variation>A</variation>
    <location>
        <position position="104"/>
    </location>
</feature>
<feature type="mutagenesis site" description="Abolishes interaction with PLK1 in mitosis." evidence="6">
    <original>T</original>
    <variation>A</variation>
    <location>
        <position position="120"/>
    </location>
</feature>
<name>MPLKI_HUMAN</name>
<reference key="1">
    <citation type="journal article" date="2004" name="Genome Res.">
        <title>The status, quality, and expansion of the NIH full-length cDNA project: the Mammalian Gene Collection (MGC).</title>
        <authorList>
            <consortium name="The MGC Project Team"/>
        </authorList>
    </citation>
    <scope>NUCLEOTIDE SEQUENCE [LARGE SCALE MRNA]</scope>
    <source>
        <tissue>Testis</tissue>
    </source>
</reference>
<reference key="2">
    <citation type="journal article" date="2002" name="Genomics">
        <title>Molecular genetic studies of human chromosome 7 in Russell-Silver syndrome.</title>
        <authorList>
            <person name="Nakabayashi K."/>
            <person name="Fernandez B.A."/>
            <person name="Teshima I."/>
            <person name="Shuman C."/>
            <person name="Proud V.K."/>
            <person name="Curry C.J."/>
            <person name="Chitayat D."/>
            <person name="Grebe T."/>
            <person name="Ming J."/>
            <person name="Oshimura M."/>
            <person name="Meguro M."/>
            <person name="Mitsuya K."/>
            <person name="Deb-Rinker P."/>
            <person name="Herbrick J.A."/>
            <person name="Weksberg R."/>
            <person name="Scherer S.W."/>
        </authorList>
    </citation>
    <scope>IDENTIFICATION</scope>
    <scope>TISSUE SPECIFICITY</scope>
</reference>
<reference key="3">
    <citation type="journal article" date="2006" name="Cell">
        <title>Global, in vivo, and site-specific phosphorylation dynamics in signaling networks.</title>
        <authorList>
            <person name="Olsen J.V."/>
            <person name="Blagoev B."/>
            <person name="Gnad F."/>
            <person name="Macek B."/>
            <person name="Kumar C."/>
            <person name="Mortensen P."/>
            <person name="Mann M."/>
        </authorList>
    </citation>
    <scope>PHOSPHORYLATION [LARGE SCALE ANALYSIS] AT SER-133</scope>
    <scope>IDENTIFICATION BY MASS SPECTROMETRY [LARGE SCALE ANALYSIS]</scope>
    <source>
        <tissue>Cervix carcinoma</tissue>
    </source>
</reference>
<reference key="4">
    <citation type="journal article" date="2007" name="Cell. Mol. Life Sci.">
        <title>TTDN1 is a Plk1-interacting protein involved in maintenance of cell cycle integrity.</title>
        <authorList>
            <person name="Zhang Y."/>
            <person name="Tian Y."/>
            <person name="Chen Q."/>
            <person name="Chen D."/>
            <person name="Zhai Z."/>
            <person name="Shu H.-B."/>
        </authorList>
    </citation>
    <scope>FUNCTION</scope>
    <scope>INTERACTION WITH PLK1</scope>
    <scope>SUBCELLULAR LOCATION</scope>
    <scope>MUTAGENESIS OF SER-93; SER-104 AND THR-120</scope>
    <scope>PHOSPHORYLATION AT SER-93 AND SER-104</scope>
</reference>
<reference key="5">
    <citation type="journal article" date="2008" name="Mol. Cell">
        <title>Kinase-selective enrichment enables quantitative phosphoproteomics of the kinome across the cell cycle.</title>
        <authorList>
            <person name="Daub H."/>
            <person name="Olsen J.V."/>
            <person name="Bairlein M."/>
            <person name="Gnad F."/>
            <person name="Oppermann F.S."/>
            <person name="Korner R."/>
            <person name="Greff Z."/>
            <person name="Keri G."/>
            <person name="Stemmann O."/>
            <person name="Mann M."/>
        </authorList>
    </citation>
    <scope>PHOSPHORYLATION [LARGE SCALE ANALYSIS] AT SER-72 AND SER-133</scope>
    <scope>IDENTIFICATION BY MASS SPECTROMETRY [LARGE SCALE ANALYSIS]</scope>
    <source>
        <tissue>Cervix carcinoma</tissue>
    </source>
</reference>
<reference key="6">
    <citation type="journal article" date="2008" name="Proc. Natl. Acad. Sci. U.S.A.">
        <title>A quantitative atlas of mitotic phosphorylation.</title>
        <authorList>
            <person name="Dephoure N."/>
            <person name="Zhou C."/>
            <person name="Villen J."/>
            <person name="Beausoleil S.A."/>
            <person name="Bakalarski C.E."/>
            <person name="Elledge S.J."/>
            <person name="Gygi S.P."/>
        </authorList>
    </citation>
    <scope>PHOSPHORYLATION [LARGE SCALE ANALYSIS] AT SER-47; THR-51; SER-80; SER-93; SER-104; THR-120 AND SER-124</scope>
    <scope>IDENTIFICATION BY MASS SPECTROMETRY [LARGE SCALE ANALYSIS]</scope>
    <source>
        <tissue>Cervix carcinoma</tissue>
    </source>
</reference>
<reference key="7">
    <citation type="journal article" date="2010" name="Sci. Signal.">
        <title>Quantitative phosphoproteomics reveals widespread full phosphorylation site occupancy during mitosis.</title>
        <authorList>
            <person name="Olsen J.V."/>
            <person name="Vermeulen M."/>
            <person name="Santamaria A."/>
            <person name="Kumar C."/>
            <person name="Miller M.L."/>
            <person name="Jensen L.J."/>
            <person name="Gnad F."/>
            <person name="Cox J."/>
            <person name="Jensen T.S."/>
            <person name="Nigg E.A."/>
            <person name="Brunak S."/>
            <person name="Mann M."/>
        </authorList>
    </citation>
    <scope>PHOSPHORYLATION [LARGE SCALE ANALYSIS] AT SER-72; SER-80; SER-82 AND SER-133</scope>
    <scope>IDENTIFICATION BY MASS SPECTROMETRY [LARGE SCALE ANALYSIS]</scope>
    <source>
        <tissue>Cervix carcinoma</tissue>
    </source>
</reference>
<reference key="8">
    <citation type="journal article" date="2013" name="J. Proteome Res.">
        <title>Toward a comprehensive characterization of a human cancer cell phosphoproteome.</title>
        <authorList>
            <person name="Zhou H."/>
            <person name="Di Palma S."/>
            <person name="Preisinger C."/>
            <person name="Peng M."/>
            <person name="Polat A.N."/>
            <person name="Heck A.J."/>
            <person name="Mohammed S."/>
        </authorList>
    </citation>
    <scope>PHOSPHORYLATION [LARGE SCALE ANALYSIS] AT SER-40; SER-47; THR-51; SER-80; SER-115 AND SER-124</scope>
    <scope>IDENTIFICATION BY MASS SPECTROMETRY [LARGE SCALE ANALYSIS]</scope>
    <source>
        <tissue>Cervix carcinoma</tissue>
        <tissue>Erythroleukemia</tissue>
    </source>
</reference>
<reference key="9">
    <citation type="journal article" date="2014" name="Mol. Cell. Proteomics">
        <title>Immunoaffinity enrichment and mass spectrometry analysis of protein methylation.</title>
        <authorList>
            <person name="Guo A."/>
            <person name="Gu H."/>
            <person name="Zhou J."/>
            <person name="Mulhern D."/>
            <person name="Wang Y."/>
            <person name="Lee K.A."/>
            <person name="Yang V."/>
            <person name="Aguiar M."/>
            <person name="Kornhauser J."/>
            <person name="Jia X."/>
            <person name="Ren J."/>
            <person name="Beausoleil S.A."/>
            <person name="Silva J.C."/>
            <person name="Vemulapalli V."/>
            <person name="Bedford M.T."/>
            <person name="Comb M.J."/>
        </authorList>
    </citation>
    <scope>METHYLATION [LARGE SCALE ANALYSIS] AT ARG-57; ARG-59; ARG-68; ARG-77 AND ARG-117</scope>
    <scope>IDENTIFICATION BY MASS SPECTROMETRY [LARGE SCALE ANALYSIS]</scope>
    <source>
        <tissue>Colon carcinoma</tissue>
    </source>
</reference>
<reference key="10">
    <citation type="journal article" date="2005" name="Am. J. Hum. Genet.">
        <title>Identification of C7orf11 (TTDN1) gene mutations and genetic heterogeneity in nonphotosensitive trichothiodystrophy.</title>
        <authorList>
            <person name="Nakabayashi K."/>
            <person name="Amann D."/>
            <person name="Ren Y."/>
            <person name="Saarialho-Kere U."/>
            <person name="Avidan N."/>
            <person name="Gentles S."/>
            <person name="MacDonald J.R."/>
            <person name="Puffenberger E.G."/>
            <person name="Christiano A.M."/>
            <person name="Martinez-Mir A."/>
            <person name="Salas-Alanis J.C."/>
            <person name="Rizzo R."/>
            <person name="Vamos E."/>
            <person name="Raams A."/>
            <person name="Les C."/>
            <person name="Seboun E."/>
            <person name="Jaspers N.G.J."/>
            <person name="Beckmann J.S."/>
            <person name="Jackson C.E."/>
            <person name="Scherer S.W."/>
        </authorList>
    </citation>
    <scope>VARIANT TTD4 VAL-144</scope>
    <scope>SUBCELLULAR LOCATION</scope>
    <scope>TISSUE SPECIFICITY</scope>
</reference>
<reference key="11">
    <citation type="journal article" date="2006" name="Science">
        <title>The consensus coding sequences of human breast and colorectal cancers.</title>
        <authorList>
            <person name="Sjoeblom T."/>
            <person name="Jones S."/>
            <person name="Wood L.D."/>
            <person name="Parsons D.W."/>
            <person name="Lin J."/>
            <person name="Barber T.D."/>
            <person name="Mandelker D."/>
            <person name="Leary R.J."/>
            <person name="Ptak J."/>
            <person name="Silliman N."/>
            <person name="Szabo S."/>
            <person name="Buckhaults P."/>
            <person name="Farrell C."/>
            <person name="Meeh P."/>
            <person name="Markowitz S.D."/>
            <person name="Willis J."/>
            <person name="Dawson D."/>
            <person name="Willson J.K.V."/>
            <person name="Gazdar A.F."/>
            <person name="Hartigan J."/>
            <person name="Wu L."/>
            <person name="Liu C."/>
            <person name="Parmigiani G."/>
            <person name="Park B.H."/>
            <person name="Bachman K.E."/>
            <person name="Papadopoulos N."/>
            <person name="Vogelstein B."/>
            <person name="Kinzler K.W."/>
            <person name="Velculescu V.E."/>
        </authorList>
    </citation>
    <scope>VARIANT [LARGE SCALE ANALYSIS] GLU-29</scope>
</reference>
<gene>
    <name type="primary">MPLKIP</name>
    <name type="synonym">C7orf11</name>
    <name type="synonym">TTDN1</name>
</gene>